<name>SMOH_AGRFC</name>
<evidence type="ECO:0000255" key="1"/>
<evidence type="ECO:0000255" key="2">
    <source>
        <dbReference type="PROSITE-ProRule" id="PRU00441"/>
    </source>
</evidence>
<evidence type="ECO:0000303" key="3">
    <source>
    </source>
</evidence>
<evidence type="ECO:0000305" key="4"/>
<evidence type="ECO:0000305" key="5">
    <source>
    </source>
</evidence>
<evidence type="ECO:0000312" key="6">
    <source>
        <dbReference type="EMBL" id="AAK90106.2"/>
    </source>
</evidence>
<comment type="function">
    <text evidence="4 5">Part of the ABC transporter complex SmoEFGH involved in sulfoquinovosyl glycerol (SQGro) uptake (Probable). Responsible for the translocation of the substrate across the membrane (Probable).</text>
</comment>
<comment type="subunit">
    <text evidence="5">The complex is probably composed of two ATP-binding proteins (SmoE), two transmembrane proteins (SmoG and SmoH) and a solute-binding protein (SmoF).</text>
</comment>
<comment type="subcellular location">
    <subcellularLocation>
        <location evidence="4">Cell inner membrane</location>
        <topology evidence="1">Multi-pass membrane protein</topology>
    </subcellularLocation>
</comment>
<comment type="similarity">
    <text evidence="4">Belongs to the binding-protein-dependent transport system permease family.</text>
</comment>
<sequence length="285" mass="30860">MSTVATSPGLSSFFSGKPLRFIAASILLVNGLFPAIWILFTSLKTEAELTVKPITWFPHAPTLANYMQAFSDQPLHLFLFNSFMVALLSTALTILISVLAAYALARLNLKYRALILSLIIAVSTFPLVTLLVPLFEIMRALNLLNSWTALILPYTVLSLPVCTLMLVSFFESIPRDLENAAMIDGCTRIGALFKVVVPLCAPGVFTAGILAFVNAWDEFLLALSFNSNPALRTLPVGIQLYQGEFAFPWPVISAALVVGIVPVAILIVIFQERVVSGLTAGGLKG</sequence>
<accession>Q7CS31</accession>
<proteinExistence type="evidence at protein level"/>
<reference key="1">
    <citation type="journal article" date="2001" name="Science">
        <title>The genome of the natural genetic engineer Agrobacterium tumefaciens C58.</title>
        <authorList>
            <person name="Wood D.W."/>
            <person name="Setubal J.C."/>
            <person name="Kaul R."/>
            <person name="Monks D.E."/>
            <person name="Kitajima J.P."/>
            <person name="Okura V.K."/>
            <person name="Zhou Y."/>
            <person name="Chen L."/>
            <person name="Wood G.E."/>
            <person name="Almeida N.F. Jr."/>
            <person name="Woo L."/>
            <person name="Chen Y."/>
            <person name="Paulsen I.T."/>
            <person name="Eisen J.A."/>
            <person name="Karp P.D."/>
            <person name="Bovee D. Sr."/>
            <person name="Chapman P."/>
            <person name="Clendenning J."/>
            <person name="Deatherage G."/>
            <person name="Gillet W."/>
            <person name="Grant C."/>
            <person name="Kutyavin T."/>
            <person name="Levy R."/>
            <person name="Li M.-J."/>
            <person name="McClelland E."/>
            <person name="Palmieri A."/>
            <person name="Raymond C."/>
            <person name="Rouse G."/>
            <person name="Saenphimmachak C."/>
            <person name="Wu Z."/>
            <person name="Romero P."/>
            <person name="Gordon D."/>
            <person name="Zhang S."/>
            <person name="Yoo H."/>
            <person name="Tao Y."/>
            <person name="Biddle P."/>
            <person name="Jung M."/>
            <person name="Krespan W."/>
            <person name="Perry M."/>
            <person name="Gordon-Kamm B."/>
            <person name="Liao L."/>
            <person name="Kim S."/>
            <person name="Hendrick C."/>
            <person name="Zhao Z.-Y."/>
            <person name="Dolan M."/>
            <person name="Chumley F."/>
            <person name="Tingey S.V."/>
            <person name="Tomb J.-F."/>
            <person name="Gordon M.P."/>
            <person name="Olson M.V."/>
            <person name="Nester E.W."/>
        </authorList>
    </citation>
    <scope>NUCLEOTIDE SEQUENCE [LARGE SCALE GENOMIC DNA]</scope>
    <source>
        <strain>C58 / ATCC 33970</strain>
    </source>
</reference>
<reference key="2">
    <citation type="journal article" date="2001" name="Science">
        <title>Genome sequence of the plant pathogen and biotechnology agent Agrobacterium tumefaciens C58.</title>
        <authorList>
            <person name="Goodner B."/>
            <person name="Hinkle G."/>
            <person name="Gattung S."/>
            <person name="Miller N."/>
            <person name="Blanchard M."/>
            <person name="Qurollo B."/>
            <person name="Goldman B.S."/>
            <person name="Cao Y."/>
            <person name="Askenazi M."/>
            <person name="Halling C."/>
            <person name="Mullin L."/>
            <person name="Houmiel K."/>
            <person name="Gordon J."/>
            <person name="Vaudin M."/>
            <person name="Iartchouk O."/>
            <person name="Epp A."/>
            <person name="Liu F."/>
            <person name="Wollam C."/>
            <person name="Allinger M."/>
            <person name="Doughty D."/>
            <person name="Scott C."/>
            <person name="Lappas C."/>
            <person name="Markelz B."/>
            <person name="Flanagan C."/>
            <person name="Crowell C."/>
            <person name="Gurson J."/>
            <person name="Lomo C."/>
            <person name="Sear C."/>
            <person name="Strub G."/>
            <person name="Cielo C."/>
            <person name="Slater S."/>
        </authorList>
    </citation>
    <scope>NUCLEOTIDE SEQUENCE [LARGE SCALE GENOMIC DNA]</scope>
    <source>
        <strain>C58 / ATCC 33970</strain>
    </source>
</reference>
<reference key="3">
    <citation type="journal article" date="2022" name="Proc. Natl. Acad. Sci. U.S.A.">
        <title>Oxidative desulfurization pathway for complete catabolism of sulfoquinovose by bacteria.</title>
        <authorList>
            <person name="Sharma M."/>
            <person name="Lingford J.P."/>
            <person name="Petricevic M."/>
            <person name="Snow A.J.D."/>
            <person name="Zhang Y."/>
            <person name="Jaervaa M.A."/>
            <person name="Mui J.W."/>
            <person name="Scott N.E."/>
            <person name="Saunders E.C."/>
            <person name="Mao R."/>
            <person name="Epa R."/>
            <person name="da Silva B.M."/>
            <person name="Pires D.E.V."/>
            <person name="Ascher D.B."/>
            <person name="McConville M.J."/>
            <person name="Davies G.J."/>
            <person name="Williams S.J."/>
            <person name="Goddard-Borger E.D."/>
        </authorList>
    </citation>
    <scope>PROBABLE FUNCTION</scope>
    <scope>SUBUNIT</scope>
    <source>
        <strain>C58 / ATCC 33970</strain>
    </source>
</reference>
<keyword id="KW-0997">Cell inner membrane</keyword>
<keyword id="KW-1003">Cell membrane</keyword>
<keyword id="KW-0472">Membrane</keyword>
<keyword id="KW-1185">Reference proteome</keyword>
<keyword id="KW-0762">Sugar transport</keyword>
<keyword id="KW-0812">Transmembrane</keyword>
<keyword id="KW-1133">Transmembrane helix</keyword>
<keyword id="KW-0813">Transport</keyword>
<gene>
    <name evidence="3" type="primary">smoH</name>
    <name evidence="6" type="ordered locus">Atu3284</name>
</gene>
<dbReference type="EMBL" id="AE007870">
    <property type="protein sequence ID" value="AAK90106.2"/>
    <property type="molecule type" value="Genomic_DNA"/>
</dbReference>
<dbReference type="RefSeq" id="NP_357321.2">
    <property type="nucleotide sequence ID" value="NC_003063.2"/>
</dbReference>
<dbReference type="RefSeq" id="WP_006314872.1">
    <property type="nucleotide sequence ID" value="NC_003063.2"/>
</dbReference>
<dbReference type="SMR" id="Q7CS31"/>
<dbReference type="STRING" id="176299.Atu3284"/>
<dbReference type="EnsemblBacteria" id="AAK90106">
    <property type="protein sequence ID" value="AAK90106"/>
    <property type="gene ID" value="Atu3284"/>
</dbReference>
<dbReference type="GeneID" id="1135158"/>
<dbReference type="KEGG" id="atu:Atu3284"/>
<dbReference type="PATRIC" id="fig|176299.10.peg.3125"/>
<dbReference type="eggNOG" id="COG0395">
    <property type="taxonomic scope" value="Bacteria"/>
</dbReference>
<dbReference type="HOGENOM" id="CLU_016047_1_2_5"/>
<dbReference type="OrthoDB" id="9815445at2"/>
<dbReference type="PhylomeDB" id="Q7CS31"/>
<dbReference type="BioCyc" id="AGRO:ATU3284-MONOMER"/>
<dbReference type="BioCyc" id="MetaCyc:MONOMER-21951"/>
<dbReference type="Proteomes" id="UP000000813">
    <property type="component" value="Chromosome linear"/>
</dbReference>
<dbReference type="GO" id="GO:0005886">
    <property type="term" value="C:plasma membrane"/>
    <property type="evidence" value="ECO:0007669"/>
    <property type="project" value="UniProtKB-SubCell"/>
</dbReference>
<dbReference type="GO" id="GO:0055085">
    <property type="term" value="P:transmembrane transport"/>
    <property type="evidence" value="ECO:0007669"/>
    <property type="project" value="InterPro"/>
</dbReference>
<dbReference type="CDD" id="cd06261">
    <property type="entry name" value="TM_PBP2"/>
    <property type="match status" value="1"/>
</dbReference>
<dbReference type="Gene3D" id="1.10.3720.10">
    <property type="entry name" value="MetI-like"/>
    <property type="match status" value="1"/>
</dbReference>
<dbReference type="InterPro" id="IPR050901">
    <property type="entry name" value="BP-dep_ABC_trans_perm"/>
</dbReference>
<dbReference type="InterPro" id="IPR000515">
    <property type="entry name" value="MetI-like"/>
</dbReference>
<dbReference type="InterPro" id="IPR035906">
    <property type="entry name" value="MetI-like_sf"/>
</dbReference>
<dbReference type="PANTHER" id="PTHR32243:SF18">
    <property type="entry name" value="INNER MEMBRANE ABC TRANSPORTER PERMEASE PROTEIN YCJP"/>
    <property type="match status" value="1"/>
</dbReference>
<dbReference type="PANTHER" id="PTHR32243">
    <property type="entry name" value="MALTOSE TRANSPORT SYSTEM PERMEASE-RELATED"/>
    <property type="match status" value="1"/>
</dbReference>
<dbReference type="Pfam" id="PF00528">
    <property type="entry name" value="BPD_transp_1"/>
    <property type="match status" value="1"/>
</dbReference>
<dbReference type="SUPFAM" id="SSF161098">
    <property type="entry name" value="MetI-like"/>
    <property type="match status" value="1"/>
</dbReference>
<dbReference type="PROSITE" id="PS50928">
    <property type="entry name" value="ABC_TM1"/>
    <property type="match status" value="1"/>
</dbReference>
<feature type="chain" id="PRO_0000458922" description="Sulfoquinovosyl glycerol transport system permease protein SmoH">
    <location>
        <begin position="1"/>
        <end position="285"/>
    </location>
</feature>
<feature type="transmembrane region" description="Helical" evidence="1">
    <location>
        <begin position="21"/>
        <end position="41"/>
    </location>
</feature>
<feature type="transmembrane region" description="Helical" evidence="1">
    <location>
        <begin position="83"/>
        <end position="103"/>
    </location>
</feature>
<feature type="transmembrane region" description="Helical" evidence="1">
    <location>
        <begin position="115"/>
        <end position="135"/>
    </location>
</feature>
<feature type="transmembrane region" description="Helical" evidence="1">
    <location>
        <begin position="150"/>
        <end position="170"/>
    </location>
</feature>
<feature type="transmembrane region" description="Helical" evidence="1">
    <location>
        <begin position="195"/>
        <end position="215"/>
    </location>
</feature>
<feature type="transmembrane region" description="Helical" evidence="1">
    <location>
        <begin position="250"/>
        <end position="270"/>
    </location>
</feature>
<feature type="domain" description="ABC transmembrane type-1" evidence="2">
    <location>
        <begin position="79"/>
        <end position="270"/>
    </location>
</feature>
<protein>
    <recommendedName>
        <fullName evidence="4">Sulfoquinovosyl glycerol transport system permease protein SmoH</fullName>
        <shortName evidence="4">SQGro transport system permease protein SmoH</shortName>
    </recommendedName>
    <alternativeName>
        <fullName evidence="3">SQ monooxygenase cluster protein H</fullName>
    </alternativeName>
</protein>
<organism>
    <name type="scientific">Agrobacterium fabrum (strain C58 / ATCC 33970)</name>
    <name type="common">Agrobacterium tumefaciens (strain C58)</name>
    <dbReference type="NCBI Taxonomy" id="176299"/>
    <lineage>
        <taxon>Bacteria</taxon>
        <taxon>Pseudomonadati</taxon>
        <taxon>Pseudomonadota</taxon>
        <taxon>Alphaproteobacteria</taxon>
        <taxon>Hyphomicrobiales</taxon>
        <taxon>Rhizobiaceae</taxon>
        <taxon>Rhizobium/Agrobacterium group</taxon>
        <taxon>Agrobacterium</taxon>
        <taxon>Agrobacterium tumefaciens complex</taxon>
    </lineage>
</organism>